<dbReference type="EMBL" id="L36817">
    <property type="protein sequence ID" value="AAC41423.1"/>
    <property type="molecule type" value="Genomic_DNA"/>
</dbReference>
<dbReference type="PIR" id="I39565">
    <property type="entry name" value="I39565"/>
</dbReference>
<dbReference type="RefSeq" id="WP_011615149.1">
    <property type="nucleotide sequence ID" value="NZ_CP129213.1"/>
</dbReference>
<dbReference type="SMR" id="Q44018"/>
<dbReference type="GO" id="GO:0042597">
    <property type="term" value="C:periplasmic space"/>
    <property type="evidence" value="ECO:0007669"/>
    <property type="project" value="UniProtKB-SubCell"/>
</dbReference>
<dbReference type="CDD" id="cd07012">
    <property type="entry name" value="PBP2_Bug_TTT"/>
    <property type="match status" value="1"/>
</dbReference>
<dbReference type="Gene3D" id="3.40.190.150">
    <property type="entry name" value="Bordetella uptake gene, domain 1"/>
    <property type="match status" value="1"/>
</dbReference>
<dbReference type="Gene3D" id="3.40.190.10">
    <property type="entry name" value="Periplasmic binding protein-like II"/>
    <property type="match status" value="1"/>
</dbReference>
<dbReference type="InterPro" id="IPR005064">
    <property type="entry name" value="BUG"/>
</dbReference>
<dbReference type="InterPro" id="IPR042100">
    <property type="entry name" value="Bug_dom1"/>
</dbReference>
<dbReference type="InterPro" id="IPR006311">
    <property type="entry name" value="TAT_signal"/>
</dbReference>
<dbReference type="PANTHER" id="PTHR42928:SF5">
    <property type="entry name" value="BLR1237 PROTEIN"/>
    <property type="match status" value="1"/>
</dbReference>
<dbReference type="PANTHER" id="PTHR42928">
    <property type="entry name" value="TRICARBOXYLATE-BINDING PROTEIN"/>
    <property type="match status" value="1"/>
</dbReference>
<dbReference type="Pfam" id="PF03401">
    <property type="entry name" value="TctC"/>
    <property type="match status" value="1"/>
</dbReference>
<dbReference type="PIRSF" id="PIRSF017082">
    <property type="entry name" value="YflP"/>
    <property type="match status" value="1"/>
</dbReference>
<dbReference type="SUPFAM" id="SSF53850">
    <property type="entry name" value="Periplasmic binding protein-like II"/>
    <property type="match status" value="1"/>
</dbReference>
<dbReference type="PROSITE" id="PS51318">
    <property type="entry name" value="TAT"/>
    <property type="match status" value="1"/>
</dbReference>
<organism>
    <name type="scientific">Cupriavidus necator</name>
    <name type="common">Alcaligenes eutrophus</name>
    <name type="synonym">Ralstonia eutropha</name>
    <dbReference type="NCBI Taxonomy" id="106590"/>
    <lineage>
        <taxon>Bacteria</taxon>
        <taxon>Pseudomonadati</taxon>
        <taxon>Pseudomonadota</taxon>
        <taxon>Betaproteobacteria</taxon>
        <taxon>Burkholderiales</taxon>
        <taxon>Burkholderiaceae</taxon>
        <taxon>Cupriavidus</taxon>
    </lineage>
</organism>
<proteinExistence type="inferred from homology"/>
<accession>Q44018</accession>
<keyword id="KW-0574">Periplasm</keyword>
<keyword id="KW-0732">Signal</keyword>
<comment type="subcellular location">
    <subcellularLocation>
        <location evidence="2">Periplasm</location>
    </subcellularLocation>
</comment>
<comment type="PTM">
    <text>Predicted to be exported by the Tat system. The position of the signal peptide cleavage has not been experimentally proven.</text>
</comment>
<comment type="similarity">
    <text evidence="2">Belongs to the UPF0065 (bug) family.</text>
</comment>
<sequence length="327" mass="35566">MQRRHFIARAGIAAATAALGLAAMPAQAQADKFPQRPIRLVIGYTAGGSTDIPFRVLADNASKILGQPVIVENKPGAGGVLPAQMMQSTAPDGYTLAQVAMPVYRLPYTTKINWDPVKDLNYIINLAGYSFGLVVPADSPIKTMQEYIAYAKANPGKLTYGSPGSMTTLHLTMEELAMKQGVQFSHIPYKGNSESMQALLGGHVMSVADTPAWAPYVEQGKLRLLSTWGEKRSARFPSVPTLKELGIGIVQTSPFGLVAPKGTDPKIVQKLHDAFKKAMDMPNYRESLAKFDMEPYYMNSQQYAQFAAETVKKEKAIIEKLGLAKAQ</sequence>
<name>YGB7_CUPNE</name>
<feature type="signal peptide" description="Tat-type signal" evidence="1">
    <location>
        <begin position="1"/>
        <end position="30"/>
    </location>
</feature>
<feature type="chain" id="PRO_0000036196" description="UPF0065 protein in gbd 5'region">
    <location>
        <begin position="31"/>
        <end position="327"/>
    </location>
</feature>
<reference key="1">
    <citation type="journal article" date="1995" name="Eur. J. Biochem.">
        <title>Metabolic pathway for biosynthesis of poly(3-hydroxybutyrate-co-4-hydroxybutyrate) from 4-hydroxybutyrate by Alcaligenes eutrophus.</title>
        <authorList>
            <person name="Valentin H.E."/>
            <person name="Zwingmann G."/>
            <person name="Schoenebaum A."/>
            <person name="Steinbuechel A."/>
        </authorList>
    </citation>
    <scope>NUCLEOTIDE SEQUENCE [GENOMIC DNA]</scope>
    <source>
        <strain>H16 / SK4040</strain>
    </source>
</reference>
<protein>
    <recommendedName>
        <fullName>UPF0065 protein in gbd 5'region</fullName>
    </recommendedName>
    <alternativeName>
        <fullName>ORF7</fullName>
    </alternativeName>
</protein>
<evidence type="ECO:0000255" key="1">
    <source>
        <dbReference type="PROSITE-ProRule" id="PRU00648"/>
    </source>
</evidence>
<evidence type="ECO:0000305" key="2"/>